<organism>
    <name type="scientific">Ehrlichia canis (strain Jake)</name>
    <dbReference type="NCBI Taxonomy" id="269484"/>
    <lineage>
        <taxon>Bacteria</taxon>
        <taxon>Pseudomonadati</taxon>
        <taxon>Pseudomonadota</taxon>
        <taxon>Alphaproteobacteria</taxon>
        <taxon>Rickettsiales</taxon>
        <taxon>Anaplasmataceae</taxon>
        <taxon>Ehrlichia</taxon>
    </lineage>
</organism>
<evidence type="ECO:0000255" key="1">
    <source>
        <dbReference type="HAMAP-Rule" id="MF_00248"/>
    </source>
</evidence>
<sequence length="189" mass="20759">MEHKDPSQMYGTTILCIRRGNQVIIAGDGQVSLGQTVIKNSAKKIKRLANDTVITGFAGATADAFTLFERLESKLEKHPGQLLRACVELAKDWRMDKYLRRLEAMMIVADKSISLIISGNGDVLEPENGIAAIGSGGNYALAAAKALCETNERFSQNMTLEYTITTAMRIASEICIYTNNNIIIEKIED</sequence>
<comment type="function">
    <text evidence="1">Protease subunit of a proteasome-like degradation complex believed to be a general protein degrading machinery.</text>
</comment>
<comment type="catalytic activity">
    <reaction evidence="1">
        <text>ATP-dependent cleavage of peptide bonds with broad specificity.</text>
        <dbReference type="EC" id="3.4.25.2"/>
    </reaction>
</comment>
<comment type="activity regulation">
    <text evidence="1">Allosterically activated by HslU binding.</text>
</comment>
<comment type="subunit">
    <text evidence="1">A double ring-shaped homohexamer of HslV is capped on each side by a ring-shaped HslU homohexamer. The assembly of the HslU/HslV complex is dependent on binding of ATP.</text>
</comment>
<comment type="subcellular location">
    <subcellularLocation>
        <location evidence="1">Cytoplasm</location>
    </subcellularLocation>
</comment>
<comment type="similarity">
    <text evidence="1">Belongs to the peptidase T1B family. HslV subfamily.</text>
</comment>
<name>HSLV_EHRCJ</name>
<proteinExistence type="inferred from homology"/>
<accession>Q3YR20</accession>
<reference key="1">
    <citation type="journal article" date="2006" name="J. Bacteriol.">
        <title>The genome of the obligately intracellular bacterium Ehrlichia canis reveals themes of complex membrane structure and immune evasion strategies.</title>
        <authorList>
            <person name="Mavromatis K."/>
            <person name="Doyle C.K."/>
            <person name="Lykidis A."/>
            <person name="Ivanova N."/>
            <person name="Francino M.P."/>
            <person name="Chain P."/>
            <person name="Shin M."/>
            <person name="Malfatti S."/>
            <person name="Larimer F."/>
            <person name="Copeland A."/>
            <person name="Detter J.C."/>
            <person name="Land M."/>
            <person name="Richardson P.M."/>
            <person name="Yu X.J."/>
            <person name="Walker D.H."/>
            <person name="McBride J.W."/>
            <person name="Kyrpides N.C."/>
        </authorList>
    </citation>
    <scope>NUCLEOTIDE SEQUENCE [LARGE SCALE GENOMIC DNA]</scope>
    <source>
        <strain>Jake</strain>
    </source>
</reference>
<feature type="chain" id="PRO_1000012608" description="ATP-dependent protease subunit HslV">
    <location>
        <begin position="1"/>
        <end position="189"/>
    </location>
</feature>
<feature type="active site" evidence="1">
    <location>
        <position position="12"/>
    </location>
</feature>
<feature type="binding site" evidence="1">
    <location>
        <position position="172"/>
    </location>
    <ligand>
        <name>Na(+)</name>
        <dbReference type="ChEBI" id="CHEBI:29101"/>
    </ligand>
</feature>
<feature type="binding site" evidence="1">
    <location>
        <position position="175"/>
    </location>
    <ligand>
        <name>Na(+)</name>
        <dbReference type="ChEBI" id="CHEBI:29101"/>
    </ligand>
</feature>
<feature type="binding site" evidence="1">
    <location>
        <position position="178"/>
    </location>
    <ligand>
        <name>Na(+)</name>
        <dbReference type="ChEBI" id="CHEBI:29101"/>
    </ligand>
</feature>
<dbReference type="EC" id="3.4.25.2" evidence="1"/>
<dbReference type="EMBL" id="CP000107">
    <property type="protein sequence ID" value="AAZ68835.1"/>
    <property type="molecule type" value="Genomic_DNA"/>
</dbReference>
<dbReference type="RefSeq" id="WP_011304912.1">
    <property type="nucleotide sequence ID" value="NC_007354.1"/>
</dbReference>
<dbReference type="SMR" id="Q3YR20"/>
<dbReference type="FunCoup" id="Q3YR20">
    <property type="interactions" value="223"/>
</dbReference>
<dbReference type="STRING" id="269484.Ecaj_0804"/>
<dbReference type="MEROPS" id="T01.006"/>
<dbReference type="KEGG" id="ecn:Ecaj_0804"/>
<dbReference type="eggNOG" id="COG5405">
    <property type="taxonomic scope" value="Bacteria"/>
</dbReference>
<dbReference type="HOGENOM" id="CLU_093872_1_0_5"/>
<dbReference type="InParanoid" id="Q3YR20"/>
<dbReference type="Proteomes" id="UP000000435">
    <property type="component" value="Chromosome"/>
</dbReference>
<dbReference type="GO" id="GO:0009376">
    <property type="term" value="C:HslUV protease complex"/>
    <property type="evidence" value="ECO:0007669"/>
    <property type="project" value="UniProtKB-UniRule"/>
</dbReference>
<dbReference type="GO" id="GO:0005839">
    <property type="term" value="C:proteasome core complex"/>
    <property type="evidence" value="ECO:0007669"/>
    <property type="project" value="InterPro"/>
</dbReference>
<dbReference type="GO" id="GO:0046872">
    <property type="term" value="F:metal ion binding"/>
    <property type="evidence" value="ECO:0007669"/>
    <property type="project" value="UniProtKB-KW"/>
</dbReference>
<dbReference type="GO" id="GO:0004298">
    <property type="term" value="F:threonine-type endopeptidase activity"/>
    <property type="evidence" value="ECO:0007669"/>
    <property type="project" value="UniProtKB-KW"/>
</dbReference>
<dbReference type="GO" id="GO:0051603">
    <property type="term" value="P:proteolysis involved in protein catabolic process"/>
    <property type="evidence" value="ECO:0007669"/>
    <property type="project" value="InterPro"/>
</dbReference>
<dbReference type="CDD" id="cd01913">
    <property type="entry name" value="protease_HslV"/>
    <property type="match status" value="1"/>
</dbReference>
<dbReference type="Gene3D" id="3.60.20.10">
    <property type="entry name" value="Glutamine Phosphoribosylpyrophosphate, subunit 1, domain 1"/>
    <property type="match status" value="1"/>
</dbReference>
<dbReference type="HAMAP" id="MF_00248">
    <property type="entry name" value="HslV"/>
    <property type="match status" value="1"/>
</dbReference>
<dbReference type="InterPro" id="IPR022281">
    <property type="entry name" value="ATP-dep_Prtase_HsIV_su"/>
</dbReference>
<dbReference type="InterPro" id="IPR029055">
    <property type="entry name" value="Ntn_hydrolases_N"/>
</dbReference>
<dbReference type="InterPro" id="IPR001353">
    <property type="entry name" value="Proteasome_sua/b"/>
</dbReference>
<dbReference type="InterPro" id="IPR023333">
    <property type="entry name" value="Proteasome_suB-type"/>
</dbReference>
<dbReference type="NCBIfam" id="TIGR03692">
    <property type="entry name" value="ATP_dep_HslV"/>
    <property type="match status" value="1"/>
</dbReference>
<dbReference type="NCBIfam" id="NF003964">
    <property type="entry name" value="PRK05456.1"/>
    <property type="match status" value="1"/>
</dbReference>
<dbReference type="PANTHER" id="PTHR32194:SF7">
    <property type="entry name" value="ATP-DEPENDENT PROTEASE SUBUNIT HSLV"/>
    <property type="match status" value="1"/>
</dbReference>
<dbReference type="PANTHER" id="PTHR32194">
    <property type="entry name" value="METALLOPROTEASE TLDD"/>
    <property type="match status" value="1"/>
</dbReference>
<dbReference type="Pfam" id="PF00227">
    <property type="entry name" value="Proteasome"/>
    <property type="match status" value="1"/>
</dbReference>
<dbReference type="PIRSF" id="PIRSF039093">
    <property type="entry name" value="HslV"/>
    <property type="match status" value="1"/>
</dbReference>
<dbReference type="SUPFAM" id="SSF56235">
    <property type="entry name" value="N-terminal nucleophile aminohydrolases (Ntn hydrolases)"/>
    <property type="match status" value="1"/>
</dbReference>
<dbReference type="PROSITE" id="PS51476">
    <property type="entry name" value="PROTEASOME_BETA_2"/>
    <property type="match status" value="1"/>
</dbReference>
<keyword id="KW-0021">Allosteric enzyme</keyword>
<keyword id="KW-0963">Cytoplasm</keyword>
<keyword id="KW-0378">Hydrolase</keyword>
<keyword id="KW-0479">Metal-binding</keyword>
<keyword id="KW-0645">Protease</keyword>
<keyword id="KW-0915">Sodium</keyword>
<keyword id="KW-0888">Threonine protease</keyword>
<protein>
    <recommendedName>
        <fullName evidence="1">ATP-dependent protease subunit HslV</fullName>
        <ecNumber evidence="1">3.4.25.2</ecNumber>
    </recommendedName>
</protein>
<gene>
    <name evidence="1" type="primary">hslV</name>
    <name type="ordered locus">Ecaj_0804</name>
</gene>